<sequence length="450" mass="44943">MQFTHLVALALALATSEAAHQGFNYGNTKSDGSAKSQADFQAEFSTAKNLVGTSGFTSARLYTMIQGGTANTPISAIPAAITEQTSLLLGLWASGGNFANEIAALKAAIAQYGDDLAKLVVGISVGSEDLYRNSVDGVKANAGIGTNPDEIVSYINEVRSTIAGTKLSGAPIGHVDTWTAWVNGSNSAVIDACDWLGFDGYPYFQNTMANSISDAKALFDESVAKTQAVAKGKEVWITETGWPVSGKTENLAVANLANAKTYWDEVGCPLFGKTNTWWYILQDADPVTPNPSFGIVGSTLSTTPLFDLSCSASSSSSAAASSTAGPSASSVIGGKASGFTTAAANSAKPTFTVGKGPGGSYNGTGFWNSTSSARPSSSAISGSSSGSAAGSSGSSGSSGSGASGASGQSSSSTGSSSAPSTSNILSNAASGLSGSICGAVVAVCLALAAL</sequence>
<proteinExistence type="inferred from homology"/>
<dbReference type="EC" id="3.2.1.39"/>
<dbReference type="EMBL" id="DS499596">
    <property type="protein sequence ID" value="EDP53632.1"/>
    <property type="molecule type" value="Genomic_DNA"/>
</dbReference>
<dbReference type="SMR" id="B0XXF8"/>
<dbReference type="GlyCosmos" id="B0XXF8">
    <property type="glycosylation" value="3 sites, No reported glycans"/>
</dbReference>
<dbReference type="EnsemblFungi" id="EDP53632">
    <property type="protein sequence ID" value="EDP53632"/>
    <property type="gene ID" value="AFUB_048180"/>
</dbReference>
<dbReference type="VEuPathDB" id="FungiDB:AFUB_048180"/>
<dbReference type="HOGENOM" id="CLU_028820_0_2_1"/>
<dbReference type="OrthoDB" id="123590at5052"/>
<dbReference type="PhylomeDB" id="B0XXF8"/>
<dbReference type="Proteomes" id="UP000001699">
    <property type="component" value="Unassembled WGS sequence"/>
</dbReference>
<dbReference type="GO" id="GO:0009986">
    <property type="term" value="C:cell surface"/>
    <property type="evidence" value="ECO:0007669"/>
    <property type="project" value="TreeGrafter"/>
</dbReference>
<dbReference type="GO" id="GO:0005576">
    <property type="term" value="C:extracellular region"/>
    <property type="evidence" value="ECO:0007669"/>
    <property type="project" value="UniProtKB-KW"/>
</dbReference>
<dbReference type="GO" id="GO:0009277">
    <property type="term" value="C:fungal-type cell wall"/>
    <property type="evidence" value="ECO:0007669"/>
    <property type="project" value="TreeGrafter"/>
</dbReference>
<dbReference type="GO" id="GO:0005886">
    <property type="term" value="C:plasma membrane"/>
    <property type="evidence" value="ECO:0007669"/>
    <property type="project" value="UniProtKB-SubCell"/>
</dbReference>
<dbReference type="GO" id="GO:0098552">
    <property type="term" value="C:side of membrane"/>
    <property type="evidence" value="ECO:0007669"/>
    <property type="project" value="UniProtKB-KW"/>
</dbReference>
<dbReference type="GO" id="GO:0042973">
    <property type="term" value="F:glucan endo-1,3-beta-D-glucosidase activity"/>
    <property type="evidence" value="ECO:0007669"/>
    <property type="project" value="UniProtKB-EC"/>
</dbReference>
<dbReference type="GO" id="GO:0071555">
    <property type="term" value="P:cell wall organization"/>
    <property type="evidence" value="ECO:0007669"/>
    <property type="project" value="UniProtKB-KW"/>
</dbReference>
<dbReference type="GO" id="GO:0000272">
    <property type="term" value="P:polysaccharide catabolic process"/>
    <property type="evidence" value="ECO:0007669"/>
    <property type="project" value="UniProtKB-KW"/>
</dbReference>
<dbReference type="FunFam" id="3.20.20.80:FF:000233">
    <property type="entry name" value="Probable glucan endo-1,3-beta-glucosidase eglC"/>
    <property type="match status" value="1"/>
</dbReference>
<dbReference type="Gene3D" id="3.20.20.80">
    <property type="entry name" value="Glycosidases"/>
    <property type="match status" value="1"/>
</dbReference>
<dbReference type="InterPro" id="IPR050732">
    <property type="entry name" value="Beta-glucan_modifiers"/>
</dbReference>
<dbReference type="InterPro" id="IPR000490">
    <property type="entry name" value="Glyco_hydro_17"/>
</dbReference>
<dbReference type="InterPro" id="IPR017853">
    <property type="entry name" value="Glycoside_hydrolase_SF"/>
</dbReference>
<dbReference type="PANTHER" id="PTHR16631">
    <property type="entry name" value="GLUCAN 1,3-BETA-GLUCOSIDASE"/>
    <property type="match status" value="1"/>
</dbReference>
<dbReference type="PANTHER" id="PTHR16631:SF13">
    <property type="entry name" value="GLUCAN ENDO-1,3-BETA-GLUCOSIDASE EGLC-RELATED"/>
    <property type="match status" value="1"/>
</dbReference>
<dbReference type="Pfam" id="PF00332">
    <property type="entry name" value="Glyco_hydro_17"/>
    <property type="match status" value="1"/>
</dbReference>
<dbReference type="SUPFAM" id="SSF51445">
    <property type="entry name" value="(Trans)glycosidases"/>
    <property type="match status" value="1"/>
</dbReference>
<comment type="function">
    <text evidence="1">Glucanases play a role in cell expansion during growth, in cell-cell fusion during mating, and in spore release during sporulation. This enzyme may be involved in beta-glucan degradation and also function biosynthetically as a transglycosylase (By similarity).</text>
</comment>
<comment type="catalytic activity">
    <reaction>
        <text>Hydrolysis of (1-&gt;3)-beta-D-glucosidic linkages in (1-&gt;3)-beta-D-glucans.</text>
        <dbReference type="EC" id="3.2.1.39"/>
    </reaction>
</comment>
<comment type="subcellular location">
    <subcellularLocation>
        <location evidence="1">Cell membrane</location>
        <topology evidence="1">Lipid-anchor</topology>
        <topology evidence="1">GPI-anchor</topology>
    </subcellularLocation>
    <subcellularLocation>
        <location evidence="1">Secreted</location>
        <location evidence="1">Cell wall</location>
    </subcellularLocation>
    <text evidence="1">Covalently-linked GPI-modified cell wall protein.</text>
</comment>
<comment type="PTM">
    <text evidence="1">The GPI-anchor is attached to the protein in the endoplasmic reticulum and serves to target the protein to the cell surface. There, the glucosamine-inositol phospholipid moiety is cleaved off and the GPI-modified mannoprotein is covalently attached via its lipidless GPI glycan remnant to the 1,6-beta-glucan of the outer cell wall layer (By similarity).</text>
</comment>
<comment type="similarity">
    <text evidence="5">Belongs to the glycosyl hydrolase 17 family.</text>
</comment>
<evidence type="ECO:0000250" key="1"/>
<evidence type="ECO:0000250" key="2">
    <source>
        <dbReference type="UniProtKB" id="O22317"/>
    </source>
</evidence>
<evidence type="ECO:0000255" key="3"/>
<evidence type="ECO:0000256" key="4">
    <source>
        <dbReference type="SAM" id="MobiDB-lite"/>
    </source>
</evidence>
<evidence type="ECO:0000305" key="5"/>
<organism>
    <name type="scientific">Aspergillus fumigatus (strain CBS 144.89 / FGSC A1163 / CEA10)</name>
    <name type="common">Neosartorya fumigata</name>
    <dbReference type="NCBI Taxonomy" id="451804"/>
    <lineage>
        <taxon>Eukaryota</taxon>
        <taxon>Fungi</taxon>
        <taxon>Dikarya</taxon>
        <taxon>Ascomycota</taxon>
        <taxon>Pezizomycotina</taxon>
        <taxon>Eurotiomycetes</taxon>
        <taxon>Eurotiomycetidae</taxon>
        <taxon>Eurotiales</taxon>
        <taxon>Aspergillaceae</taxon>
        <taxon>Aspergillus</taxon>
        <taxon>Aspergillus subgen. Fumigati</taxon>
    </lineage>
</organism>
<protein>
    <recommendedName>
        <fullName>Probable glucan endo-1,3-beta-glucosidase eglC</fullName>
        <ecNumber>3.2.1.39</ecNumber>
    </recommendedName>
    <alternativeName>
        <fullName>Endo-1,3-beta-glucanase eglC</fullName>
    </alternativeName>
    <alternativeName>
        <fullName>Laminarinase eglC</fullName>
    </alternativeName>
</protein>
<reference key="1">
    <citation type="journal article" date="2008" name="PLoS Genet.">
        <title>Genomic islands in the pathogenic filamentous fungus Aspergillus fumigatus.</title>
        <authorList>
            <person name="Fedorova N.D."/>
            <person name="Khaldi N."/>
            <person name="Joardar V.S."/>
            <person name="Maiti R."/>
            <person name="Amedeo P."/>
            <person name="Anderson M.J."/>
            <person name="Crabtree J."/>
            <person name="Silva J.C."/>
            <person name="Badger J.H."/>
            <person name="Albarraq A."/>
            <person name="Angiuoli S."/>
            <person name="Bussey H."/>
            <person name="Bowyer P."/>
            <person name="Cotty P.J."/>
            <person name="Dyer P.S."/>
            <person name="Egan A."/>
            <person name="Galens K."/>
            <person name="Fraser-Liggett C.M."/>
            <person name="Haas B.J."/>
            <person name="Inman J.M."/>
            <person name="Kent R."/>
            <person name="Lemieux S."/>
            <person name="Malavazi I."/>
            <person name="Orvis J."/>
            <person name="Roemer T."/>
            <person name="Ronning C.M."/>
            <person name="Sundaram J.P."/>
            <person name="Sutton G."/>
            <person name="Turner G."/>
            <person name="Venter J.C."/>
            <person name="White O.R."/>
            <person name="Whitty B.R."/>
            <person name="Youngman P."/>
            <person name="Wolfe K.H."/>
            <person name="Goldman G.H."/>
            <person name="Wortman J.R."/>
            <person name="Jiang B."/>
            <person name="Denning D.W."/>
            <person name="Nierman W.C."/>
        </authorList>
    </citation>
    <scope>NUCLEOTIDE SEQUENCE [LARGE SCALE GENOMIC DNA]</scope>
    <source>
        <strain>CBS 144.89 / FGSC A1163 / CEA10</strain>
    </source>
</reference>
<gene>
    <name type="primary">eglC</name>
    <name type="ORF">AFUB_048180</name>
</gene>
<feature type="signal peptide" evidence="3">
    <location>
        <begin position="1"/>
        <end position="18"/>
    </location>
</feature>
<feature type="chain" id="PRO_0000395140" description="Probable glucan endo-1,3-beta-glucosidase eglC">
    <location>
        <begin position="19"/>
        <end position="427"/>
    </location>
</feature>
<feature type="propeptide" id="PRO_0000395141" description="Removed in mature form" evidence="3">
    <location>
        <begin position="428"/>
        <end position="450"/>
    </location>
</feature>
<feature type="region of interest" description="Disordered" evidence="4">
    <location>
        <begin position="377"/>
        <end position="420"/>
    </location>
</feature>
<feature type="compositionally biased region" description="Low complexity" evidence="4">
    <location>
        <begin position="377"/>
        <end position="395"/>
    </location>
</feature>
<feature type="compositionally biased region" description="Low complexity" evidence="4">
    <location>
        <begin position="405"/>
        <end position="420"/>
    </location>
</feature>
<feature type="active site" description="Proton donor" evidence="2">
    <location>
        <position position="128"/>
    </location>
</feature>
<feature type="active site" description="Nucleophile" evidence="2">
    <location>
        <position position="239"/>
    </location>
</feature>
<feature type="lipid moiety-binding region" description="GPI-anchor amidated asparagine" evidence="3">
    <location>
        <position position="427"/>
    </location>
</feature>
<feature type="glycosylation site" description="N-linked (GlcNAc...) asparagine" evidence="3">
    <location>
        <position position="183"/>
    </location>
</feature>
<feature type="glycosylation site" description="N-linked (GlcNAc...) asparagine" evidence="3">
    <location>
        <position position="362"/>
    </location>
</feature>
<feature type="glycosylation site" description="N-linked (GlcNAc...) asparagine" evidence="3">
    <location>
        <position position="368"/>
    </location>
</feature>
<name>EGLC_ASPFC</name>
<accession>B0XXF8</accession>
<keyword id="KW-0119">Carbohydrate metabolism</keyword>
<keyword id="KW-1003">Cell membrane</keyword>
<keyword id="KW-0134">Cell wall</keyword>
<keyword id="KW-0961">Cell wall biogenesis/degradation</keyword>
<keyword id="KW-0325">Glycoprotein</keyword>
<keyword id="KW-0336">GPI-anchor</keyword>
<keyword id="KW-0378">Hydrolase</keyword>
<keyword id="KW-0449">Lipoprotein</keyword>
<keyword id="KW-0472">Membrane</keyword>
<keyword id="KW-0624">Polysaccharide degradation</keyword>
<keyword id="KW-0964">Secreted</keyword>
<keyword id="KW-0732">Signal</keyword>